<reference key="1">
    <citation type="journal article" date="2001" name="Nature">
        <title>Complete genome sequence of Salmonella enterica serovar Typhimurium LT2.</title>
        <authorList>
            <person name="McClelland M."/>
            <person name="Sanderson K.E."/>
            <person name="Spieth J."/>
            <person name="Clifton S.W."/>
            <person name="Latreille P."/>
            <person name="Courtney L."/>
            <person name="Porwollik S."/>
            <person name="Ali J."/>
            <person name="Dante M."/>
            <person name="Du F."/>
            <person name="Hou S."/>
            <person name="Layman D."/>
            <person name="Leonard S."/>
            <person name="Nguyen C."/>
            <person name="Scott K."/>
            <person name="Holmes A."/>
            <person name="Grewal N."/>
            <person name="Mulvaney E."/>
            <person name="Ryan E."/>
            <person name="Sun H."/>
            <person name="Florea L."/>
            <person name="Miller W."/>
            <person name="Stoneking T."/>
            <person name="Nhan M."/>
            <person name="Waterston R."/>
            <person name="Wilson R.K."/>
        </authorList>
    </citation>
    <scope>NUCLEOTIDE SEQUENCE [LARGE SCALE GENOMIC DNA]</scope>
    <source>
        <strain>LT2 / SGSC1412 / ATCC 700720</strain>
    </source>
</reference>
<reference key="2">
    <citation type="journal article" date="1991" name="Biochim. Biophys. Acta">
        <title>Cloning and sequence analysis of hydrogenase regulatory genes (hydHG) from Salmonella typhimurium.</title>
        <authorList>
            <person name="Chopra A.K."/>
            <person name="Peterson J.W."/>
            <person name="Prasad R."/>
        </authorList>
    </citation>
    <scope>NUCLEOTIDE SEQUENCE [GENOMIC DNA] OF 258-465</scope>
</reference>
<reference key="3">
    <citation type="journal article" date="2012" name="Biochem. J.">
        <title>ZraP is a periplasmic molecular chaperone and a repressor of the zinc-responsive two-component regulator ZraSR.</title>
        <authorList>
            <person name="Appia-Ayme C."/>
            <person name="Hall A."/>
            <person name="Patrick E."/>
            <person name="Rajadurai S."/>
            <person name="Clarke T.A."/>
            <person name="Rowley G."/>
        </authorList>
    </citation>
    <scope>FUNCTION</scope>
    <scope>ACTIVITY REGULATION</scope>
    <source>
        <strain>SL1344</strain>
    </source>
</reference>
<organism>
    <name type="scientific">Salmonella typhimurium (strain LT2 / SGSC1412 / ATCC 700720)</name>
    <dbReference type="NCBI Taxonomy" id="99287"/>
    <lineage>
        <taxon>Bacteria</taxon>
        <taxon>Pseudomonadati</taxon>
        <taxon>Pseudomonadota</taxon>
        <taxon>Gammaproteobacteria</taxon>
        <taxon>Enterobacterales</taxon>
        <taxon>Enterobacteriaceae</taxon>
        <taxon>Salmonella</taxon>
    </lineage>
</organism>
<keyword id="KW-0067">ATP-binding</keyword>
<keyword id="KW-0997">Cell inner membrane</keyword>
<keyword id="KW-1003">Cell membrane</keyword>
<keyword id="KW-0418">Kinase</keyword>
<keyword id="KW-0472">Membrane</keyword>
<keyword id="KW-0547">Nucleotide-binding</keyword>
<keyword id="KW-0597">Phosphoprotein</keyword>
<keyword id="KW-1185">Reference proteome</keyword>
<keyword id="KW-0346">Stress response</keyword>
<keyword id="KW-0808">Transferase</keyword>
<keyword id="KW-0812">Transmembrane</keyword>
<keyword id="KW-1133">Transmembrane helix</keyword>
<keyword id="KW-0902">Two-component regulatory system</keyword>
<keyword id="KW-0862">Zinc</keyword>
<evidence type="ECO:0000250" key="1">
    <source>
        <dbReference type="UniProtKB" id="P14377"/>
    </source>
</evidence>
<evidence type="ECO:0000255" key="2"/>
<evidence type="ECO:0000255" key="3">
    <source>
        <dbReference type="PROSITE-ProRule" id="PRU00107"/>
    </source>
</evidence>
<evidence type="ECO:0000269" key="4">
    <source>
    </source>
</evidence>
<evidence type="ECO:0000303" key="5">
    <source>
    </source>
</evidence>
<evidence type="ECO:0000303" key="6">
    <source>
    </source>
</evidence>
<evidence type="ECO:0000305" key="7"/>
<evidence type="ECO:0000305" key="8">
    <source>
    </source>
</evidence>
<dbReference type="EC" id="2.7.13.3" evidence="1"/>
<dbReference type="EMBL" id="AF170176">
    <property type="protein sequence ID" value="AAF33505.1"/>
    <property type="molecule type" value="Genomic_DNA"/>
</dbReference>
<dbReference type="EMBL" id="AE006468">
    <property type="protein sequence ID" value="AAL23001.1"/>
    <property type="molecule type" value="Genomic_DNA"/>
</dbReference>
<dbReference type="EMBL" id="M64988">
    <property type="protein sequence ID" value="AAA27148.1"/>
    <property type="molecule type" value="mRNA"/>
</dbReference>
<dbReference type="PIR" id="S19605">
    <property type="entry name" value="S19605"/>
</dbReference>
<dbReference type="RefSeq" id="NP_463042.1">
    <property type="nucleotide sequence ID" value="NC_003197.2"/>
</dbReference>
<dbReference type="RefSeq" id="WP_001526924.1">
    <property type="nucleotide sequence ID" value="NC_003197.2"/>
</dbReference>
<dbReference type="SMR" id="P37461"/>
<dbReference type="STRING" id="99287.STM4173"/>
<dbReference type="PaxDb" id="99287-STM4173"/>
<dbReference type="GeneID" id="1255699"/>
<dbReference type="KEGG" id="stm:STM4173"/>
<dbReference type="PATRIC" id="fig|99287.12.peg.4387"/>
<dbReference type="HOGENOM" id="CLU_000445_89_29_6"/>
<dbReference type="PhylomeDB" id="P37461"/>
<dbReference type="BioCyc" id="SENT99287:STM4173-MONOMER"/>
<dbReference type="BRENDA" id="2.7.13.3">
    <property type="organism ID" value="5542"/>
</dbReference>
<dbReference type="Proteomes" id="UP000001014">
    <property type="component" value="Chromosome"/>
</dbReference>
<dbReference type="GO" id="GO:0005886">
    <property type="term" value="C:plasma membrane"/>
    <property type="evidence" value="ECO:0007669"/>
    <property type="project" value="UniProtKB-SubCell"/>
</dbReference>
<dbReference type="GO" id="GO:0005524">
    <property type="term" value="F:ATP binding"/>
    <property type="evidence" value="ECO:0007669"/>
    <property type="project" value="UniProtKB-KW"/>
</dbReference>
<dbReference type="GO" id="GO:0000155">
    <property type="term" value="F:phosphorelay sensor kinase activity"/>
    <property type="evidence" value="ECO:0007669"/>
    <property type="project" value="InterPro"/>
</dbReference>
<dbReference type="CDD" id="cd00082">
    <property type="entry name" value="HisKA"/>
    <property type="match status" value="1"/>
</dbReference>
<dbReference type="Gene3D" id="1.10.287.130">
    <property type="match status" value="1"/>
</dbReference>
<dbReference type="Gene3D" id="3.30.565.10">
    <property type="entry name" value="Histidine kinase-like ATPase, C-terminal domain"/>
    <property type="match status" value="1"/>
</dbReference>
<dbReference type="Gene3D" id="3.30.450.20">
    <property type="entry name" value="PAS domain"/>
    <property type="match status" value="1"/>
</dbReference>
<dbReference type="InterPro" id="IPR036890">
    <property type="entry name" value="HATPase_C_sf"/>
</dbReference>
<dbReference type="InterPro" id="IPR005467">
    <property type="entry name" value="His_kinase_dom"/>
</dbReference>
<dbReference type="InterPro" id="IPR003661">
    <property type="entry name" value="HisK_dim/P_dom"/>
</dbReference>
<dbReference type="InterPro" id="IPR036097">
    <property type="entry name" value="HisK_dim/P_sf"/>
</dbReference>
<dbReference type="InterPro" id="IPR029151">
    <property type="entry name" value="Sensor-like_sf"/>
</dbReference>
<dbReference type="InterPro" id="IPR004358">
    <property type="entry name" value="Sig_transdc_His_kin-like_C"/>
</dbReference>
<dbReference type="NCBIfam" id="NF007688">
    <property type="entry name" value="PRK10364.1"/>
    <property type="match status" value="1"/>
</dbReference>
<dbReference type="PANTHER" id="PTHR43065">
    <property type="entry name" value="SENSOR HISTIDINE KINASE"/>
    <property type="match status" value="1"/>
</dbReference>
<dbReference type="PANTHER" id="PTHR43065:SF54">
    <property type="entry name" value="SENSOR PROTEIN ZRAS"/>
    <property type="match status" value="1"/>
</dbReference>
<dbReference type="Pfam" id="PF02518">
    <property type="entry name" value="HATPase_c"/>
    <property type="match status" value="1"/>
</dbReference>
<dbReference type="Pfam" id="PF00512">
    <property type="entry name" value="HisKA"/>
    <property type="match status" value="1"/>
</dbReference>
<dbReference type="PRINTS" id="PR00344">
    <property type="entry name" value="BCTRLSENSOR"/>
</dbReference>
<dbReference type="SMART" id="SM00387">
    <property type="entry name" value="HATPase_c"/>
    <property type="match status" value="1"/>
</dbReference>
<dbReference type="SMART" id="SM00388">
    <property type="entry name" value="HisKA"/>
    <property type="match status" value="1"/>
</dbReference>
<dbReference type="SUPFAM" id="SSF55874">
    <property type="entry name" value="ATPase domain of HSP90 chaperone/DNA topoisomerase II/histidine kinase"/>
    <property type="match status" value="1"/>
</dbReference>
<dbReference type="SUPFAM" id="SSF47384">
    <property type="entry name" value="Homodimeric domain of signal transducing histidine kinase"/>
    <property type="match status" value="1"/>
</dbReference>
<dbReference type="SUPFAM" id="SSF103190">
    <property type="entry name" value="Sensory domain-like"/>
    <property type="match status" value="1"/>
</dbReference>
<dbReference type="PROSITE" id="PS50109">
    <property type="entry name" value="HIS_KIN"/>
    <property type="match status" value="1"/>
</dbReference>
<gene>
    <name evidence="6" type="primary">zraS</name>
    <name evidence="5" type="synonym">hydH</name>
    <name type="ordered locus">STM4173</name>
    <name type="ORF">STMF1.26</name>
</gene>
<protein>
    <recommendedName>
        <fullName evidence="7">Sensor histidine kinase ZraS</fullName>
        <ecNumber evidence="1">2.7.13.3</ecNumber>
    </recommendedName>
</protein>
<feature type="chain" id="PRO_0000074913" description="Sensor histidine kinase ZraS">
    <location>
        <begin position="1"/>
        <end position="465"/>
    </location>
</feature>
<feature type="topological domain" description="Cytoplasmic" evidence="7">
    <location>
        <begin position="1"/>
        <end position="14"/>
    </location>
</feature>
<feature type="transmembrane region" description="Helical" evidence="2">
    <location>
        <begin position="15"/>
        <end position="35"/>
    </location>
</feature>
<feature type="topological domain" description="Periplasmic" evidence="7">
    <location>
        <begin position="36"/>
        <end position="202"/>
    </location>
</feature>
<feature type="transmembrane region" description="Helical" evidence="2">
    <location>
        <begin position="203"/>
        <end position="223"/>
    </location>
</feature>
<feature type="topological domain" description="Cytoplasmic" evidence="7">
    <location>
        <begin position="224"/>
        <end position="465"/>
    </location>
</feature>
<feature type="domain" description="Histidine kinase" evidence="3">
    <location>
        <begin position="253"/>
        <end position="461"/>
    </location>
</feature>
<feature type="modified residue" description="Phosphohistidine; by autocatalysis" evidence="3">
    <location>
        <position position="256"/>
    </location>
</feature>
<proteinExistence type="evidence at transcript level"/>
<accession>P37461</accession>
<accession>Q9L9H9</accession>
<comment type="function">
    <text evidence="1 4">Part of the Zra signaling pathway, an envelope stress response (ESR) system composed of the periplasmic accessory protein ZraP, the histidine kinase ZraS and the transcriptional regulator ZraR (PubMed:1756170). The ZraPSR system contributes to antibiotic resistance and is important for membrane integrity in the presence of membrane-targeting biocides (By similarity). ZraS is a member of the two-component regulatory system ZraS/ZraR (PubMed:1756170). Functions as a membrane-associated sensor kinase that phosphorylates ZraR in response to high concentrations of Zn(2+) or Pb(2+) in the medium (By similarity).</text>
</comment>
<comment type="catalytic activity">
    <reaction evidence="1">
        <text>ATP + protein L-histidine = ADP + protein N-phospho-L-histidine.</text>
        <dbReference type="EC" id="2.7.13.3"/>
    </reaction>
</comment>
<comment type="activity regulation">
    <text evidence="8">Activity of the ZraS/ZraR two-component system is repressed by the zinc-bound form of ZraP, which probably interacts with the periplasmic region of ZraS.</text>
</comment>
<comment type="subcellular location">
    <subcellularLocation>
        <location evidence="1">Cell inner membrane</location>
        <topology evidence="2">Multi-pass membrane protein</topology>
    </subcellularLocation>
</comment>
<comment type="PTM">
    <text evidence="1">Autophosphorylated.</text>
</comment>
<comment type="caution">
    <text evidence="8">Was originally thought to be involved in the regulation of the labile hydrogenase activity.</text>
</comment>
<name>ZRAS_SALTY</name>
<sequence>MSFIRLHKDAAATWLSRLLPAAIFILVGLFSIMVIRDYGRESAAARQTLLEKGNVLIRALESGTRVGMGMRMHHAQQQTLLEEMAGQPGVLWFAVTDAQGVIITHSNPGMVGKSLYSPSEMHQLNPGPQERWRRVDVAANGETVPALEIYRQFQPLFGMRGHGMRGHGMARSANDDEPAKQTIFIAFDASELAATQAREWRNTLIVLSALAAVLLATLLAFFWHQRYQRSHRELLDAMKRKEKLVAMGHLAAGVAHEIRNPLSSIKGLAKYFAERTPAGGESHELAQVMAKEADRLNRVVSELLELVKPAHLTLQTVNLNDIITHSLNLVSQDAQSREIQLRFTANETLKRIQADPDRLTQVLLNLYLNAIHAIGRQGTISVEAKESGTDRVIITVTDSGKGIAPDQLEAIFTPYFTTKADGTGLGLAVVQNIIEQHGGAIKVKSIEGKGAVFTIWLPVIARQQD</sequence>